<evidence type="ECO:0000250" key="1"/>
<evidence type="ECO:0000255" key="2">
    <source>
        <dbReference type="HAMAP-Rule" id="MF_00614"/>
    </source>
</evidence>
<evidence type="ECO:0007829" key="3">
    <source>
        <dbReference type="PDB" id="4WA8"/>
    </source>
</evidence>
<accession>Q8TXU4</accession>
<name>FEN_METKA</name>
<dbReference type="EC" id="3.1.-.-" evidence="2"/>
<dbReference type="EMBL" id="AE009439">
    <property type="protein sequence ID" value="AAM01781.1"/>
    <property type="molecule type" value="Genomic_DNA"/>
</dbReference>
<dbReference type="RefSeq" id="WP_011018936.1">
    <property type="nucleotide sequence ID" value="NC_003551.1"/>
</dbReference>
<dbReference type="PDB" id="4WA8">
    <property type="method" value="X-ray"/>
    <property type="resolution" value="2.20 A"/>
    <property type="chains" value="A/B=1-348"/>
</dbReference>
<dbReference type="PDBsum" id="4WA8"/>
<dbReference type="SMR" id="Q8TXU4"/>
<dbReference type="FunCoup" id="Q8TXU4">
    <property type="interactions" value="153"/>
</dbReference>
<dbReference type="STRING" id="190192.MK0566"/>
<dbReference type="PaxDb" id="190192-MK0566"/>
<dbReference type="EnsemblBacteria" id="AAM01781">
    <property type="protein sequence ID" value="AAM01781"/>
    <property type="gene ID" value="MK0566"/>
</dbReference>
<dbReference type="GeneID" id="1476667"/>
<dbReference type="KEGG" id="mka:MK0566"/>
<dbReference type="PATRIC" id="fig|190192.8.peg.601"/>
<dbReference type="HOGENOM" id="CLU_032444_0_0_2"/>
<dbReference type="InParanoid" id="Q8TXU4"/>
<dbReference type="OrthoDB" id="9593at2157"/>
<dbReference type="EvolutionaryTrace" id="Q8TXU4"/>
<dbReference type="Proteomes" id="UP000001826">
    <property type="component" value="Chromosome"/>
</dbReference>
<dbReference type="GO" id="GO:0008409">
    <property type="term" value="F:5'-3' exonuclease activity"/>
    <property type="evidence" value="ECO:0007669"/>
    <property type="project" value="UniProtKB-UniRule"/>
</dbReference>
<dbReference type="GO" id="GO:0017108">
    <property type="term" value="F:5'-flap endonuclease activity"/>
    <property type="evidence" value="ECO:0007669"/>
    <property type="project" value="UniProtKB-UniRule"/>
</dbReference>
<dbReference type="GO" id="GO:0003677">
    <property type="term" value="F:DNA binding"/>
    <property type="evidence" value="ECO:0007669"/>
    <property type="project" value="UniProtKB-UniRule"/>
</dbReference>
<dbReference type="GO" id="GO:0000287">
    <property type="term" value="F:magnesium ion binding"/>
    <property type="evidence" value="ECO:0007669"/>
    <property type="project" value="UniProtKB-UniRule"/>
</dbReference>
<dbReference type="GO" id="GO:0006281">
    <property type="term" value="P:DNA repair"/>
    <property type="evidence" value="ECO:0007669"/>
    <property type="project" value="UniProtKB-UniRule"/>
</dbReference>
<dbReference type="GO" id="GO:0043137">
    <property type="term" value="P:DNA replication, removal of RNA primer"/>
    <property type="evidence" value="ECO:0007669"/>
    <property type="project" value="UniProtKB-UniRule"/>
</dbReference>
<dbReference type="CDD" id="cd09903">
    <property type="entry name" value="H3TH_FEN1-Arc"/>
    <property type="match status" value="1"/>
</dbReference>
<dbReference type="CDD" id="cd09867">
    <property type="entry name" value="PIN_FEN1"/>
    <property type="match status" value="1"/>
</dbReference>
<dbReference type="FunFam" id="3.40.50.1010:FF:000016">
    <property type="entry name" value="Flap endonuclease 1"/>
    <property type="match status" value="1"/>
</dbReference>
<dbReference type="FunFam" id="1.10.150.20:FF:000030">
    <property type="entry name" value="Flap endonuclease GEN-like 1"/>
    <property type="match status" value="1"/>
</dbReference>
<dbReference type="Gene3D" id="1.10.150.20">
    <property type="entry name" value="5' to 3' exonuclease, C-terminal subdomain"/>
    <property type="match status" value="1"/>
</dbReference>
<dbReference type="Gene3D" id="3.40.50.1010">
    <property type="entry name" value="5'-nuclease"/>
    <property type="match status" value="1"/>
</dbReference>
<dbReference type="HAMAP" id="MF_00614">
    <property type="entry name" value="Fen"/>
    <property type="match status" value="1"/>
</dbReference>
<dbReference type="InterPro" id="IPR036279">
    <property type="entry name" value="5-3_exonuclease_C_sf"/>
</dbReference>
<dbReference type="InterPro" id="IPR023426">
    <property type="entry name" value="Flap_endonuc"/>
</dbReference>
<dbReference type="InterPro" id="IPR019973">
    <property type="entry name" value="Flap_endonuc_arc"/>
</dbReference>
<dbReference type="InterPro" id="IPR008918">
    <property type="entry name" value="HhH2"/>
</dbReference>
<dbReference type="InterPro" id="IPR029060">
    <property type="entry name" value="PIN-like_dom_sf"/>
</dbReference>
<dbReference type="InterPro" id="IPR006086">
    <property type="entry name" value="XPG-I_dom"/>
</dbReference>
<dbReference type="InterPro" id="IPR006084">
    <property type="entry name" value="XPG/Rad2"/>
</dbReference>
<dbReference type="InterPro" id="IPR019974">
    <property type="entry name" value="XPG_CS"/>
</dbReference>
<dbReference type="InterPro" id="IPR006085">
    <property type="entry name" value="XPG_DNA_repair_N"/>
</dbReference>
<dbReference type="NCBIfam" id="TIGR03674">
    <property type="entry name" value="fen_arch"/>
    <property type="match status" value="1"/>
</dbReference>
<dbReference type="PANTHER" id="PTHR11081:SF9">
    <property type="entry name" value="FLAP ENDONUCLEASE 1"/>
    <property type="match status" value="1"/>
</dbReference>
<dbReference type="PANTHER" id="PTHR11081">
    <property type="entry name" value="FLAP ENDONUCLEASE FAMILY MEMBER"/>
    <property type="match status" value="1"/>
</dbReference>
<dbReference type="Pfam" id="PF00867">
    <property type="entry name" value="XPG_I"/>
    <property type="match status" value="1"/>
</dbReference>
<dbReference type="Pfam" id="PF00752">
    <property type="entry name" value="XPG_N"/>
    <property type="match status" value="1"/>
</dbReference>
<dbReference type="PRINTS" id="PR00853">
    <property type="entry name" value="XPGRADSUPER"/>
</dbReference>
<dbReference type="SMART" id="SM00279">
    <property type="entry name" value="HhH2"/>
    <property type="match status" value="1"/>
</dbReference>
<dbReference type="SMART" id="SM00484">
    <property type="entry name" value="XPGI"/>
    <property type="match status" value="1"/>
</dbReference>
<dbReference type="SMART" id="SM00485">
    <property type="entry name" value="XPGN"/>
    <property type="match status" value="1"/>
</dbReference>
<dbReference type="SUPFAM" id="SSF47807">
    <property type="entry name" value="5' to 3' exonuclease, C-terminal subdomain"/>
    <property type="match status" value="1"/>
</dbReference>
<dbReference type="SUPFAM" id="SSF88723">
    <property type="entry name" value="PIN domain-like"/>
    <property type="match status" value="1"/>
</dbReference>
<dbReference type="PROSITE" id="PS00841">
    <property type="entry name" value="XPG_1"/>
    <property type="match status" value="1"/>
</dbReference>
<comment type="function">
    <text evidence="1">Structure-specific nuclease with 5'-flap endonuclease and 5'-3' exonuclease activities involved in DNA replication and repair. During DNA replication, cleaves the 5'-overhanging flap structure that is generated by displacement synthesis when DNA polymerase encounters the 5'-end of a downstream Okazaki fragment. Binds the unpaired 3'-DNA end and kinks the DNA to facilitate 5' cleavage specificity. Cleaves one nucleotide into the double-stranded DNA from the junction in flap DNA, leaving a nick for ligation. Also involved in the base excision repair (BER) pathway. Acts as a genome stabilization factor that prevents flaps from equilibrating into structures that lead to duplications and deletions. Also possesses 5'-3' exonuclease activity on nicked or gapped double-stranded DNA (By similarity).</text>
</comment>
<comment type="cofactor">
    <cofactor evidence="2">
        <name>Mg(2+)</name>
        <dbReference type="ChEBI" id="CHEBI:18420"/>
    </cofactor>
    <text evidence="2">Binds 2 magnesium ions per subunit. They probably participate in the reaction catalyzed by the enzyme. May bind an additional third magnesium ion after substrate binding.</text>
</comment>
<comment type="subunit">
    <text evidence="2">Interacts with PCNA. PCNA stimulates the nuclease activity without altering cleavage specificity.</text>
</comment>
<comment type="similarity">
    <text evidence="2">Belongs to the XPG/RAD2 endonuclease family. FEN1 subfamily.</text>
</comment>
<reference key="1">
    <citation type="journal article" date="2002" name="Proc. Natl. Acad. Sci. U.S.A.">
        <title>The complete genome of hyperthermophile Methanopyrus kandleri AV19 and monophyly of archaeal methanogens.</title>
        <authorList>
            <person name="Slesarev A.I."/>
            <person name="Mezhevaya K.V."/>
            <person name="Makarova K.S."/>
            <person name="Polushin N.N."/>
            <person name="Shcherbinina O.V."/>
            <person name="Shakhova V.V."/>
            <person name="Belova G.I."/>
            <person name="Aravind L."/>
            <person name="Natale D.A."/>
            <person name="Rogozin I.B."/>
            <person name="Tatusov R.L."/>
            <person name="Wolf Y.I."/>
            <person name="Stetter K.O."/>
            <person name="Malykh A.G."/>
            <person name="Koonin E.V."/>
            <person name="Kozyavkin S.A."/>
        </authorList>
    </citation>
    <scope>NUCLEOTIDE SEQUENCE [LARGE SCALE GENOMIC DNA]</scope>
    <source>
        <strain>AV19 / DSM 6324 / JCM 9639 / NBRC 100938</strain>
    </source>
</reference>
<organism>
    <name type="scientific">Methanopyrus kandleri (strain AV19 / DSM 6324 / JCM 9639 / NBRC 100938)</name>
    <dbReference type="NCBI Taxonomy" id="190192"/>
    <lineage>
        <taxon>Archaea</taxon>
        <taxon>Methanobacteriati</taxon>
        <taxon>Methanobacteriota</taxon>
        <taxon>Methanomada group</taxon>
        <taxon>Methanopyri</taxon>
        <taxon>Methanopyrales</taxon>
        <taxon>Methanopyraceae</taxon>
        <taxon>Methanopyrus</taxon>
    </lineage>
</organism>
<feature type="chain" id="PRO_0000154054" description="Flap endonuclease 1">
    <location>
        <begin position="1"/>
        <end position="348"/>
    </location>
</feature>
<feature type="region of interest" description="N-domain">
    <location>
        <begin position="1"/>
        <end position="98"/>
    </location>
</feature>
<feature type="region of interest" description="I-domain">
    <location>
        <begin position="113"/>
        <end position="256"/>
    </location>
</feature>
<feature type="region of interest" description="Interaction with PCNA" evidence="2">
    <location>
        <begin position="340"/>
        <end position="348"/>
    </location>
</feature>
<feature type="binding site" evidence="2">
    <location>
        <position position="28"/>
    </location>
    <ligand>
        <name>Mg(2+)</name>
        <dbReference type="ChEBI" id="CHEBI:18420"/>
        <label>1</label>
    </ligand>
</feature>
<feature type="binding site" evidence="2">
    <location>
        <position position="80"/>
    </location>
    <ligand>
        <name>Mg(2+)</name>
        <dbReference type="ChEBI" id="CHEBI:18420"/>
        <label>1</label>
    </ligand>
</feature>
<feature type="binding site" evidence="2">
    <location>
        <position position="149"/>
    </location>
    <ligand>
        <name>Mg(2+)</name>
        <dbReference type="ChEBI" id="CHEBI:18420"/>
        <label>1</label>
    </ligand>
</feature>
<feature type="binding site" evidence="2">
    <location>
        <position position="151"/>
    </location>
    <ligand>
        <name>Mg(2+)</name>
        <dbReference type="ChEBI" id="CHEBI:18420"/>
        <label>1</label>
    </ligand>
</feature>
<feature type="binding site" evidence="2">
    <location>
        <position position="170"/>
    </location>
    <ligand>
        <name>Mg(2+)</name>
        <dbReference type="ChEBI" id="CHEBI:18420"/>
        <label>2</label>
    </ligand>
</feature>
<feature type="binding site" evidence="2">
    <location>
        <position position="172"/>
    </location>
    <ligand>
        <name>Mg(2+)</name>
        <dbReference type="ChEBI" id="CHEBI:18420"/>
        <label>2</label>
    </ligand>
</feature>
<feature type="binding site" evidence="2">
    <location>
        <position position="234"/>
    </location>
    <ligand>
        <name>Mg(2+)</name>
        <dbReference type="ChEBI" id="CHEBI:18420"/>
        <label>2</label>
    </ligand>
</feature>
<feature type="helix" evidence="3">
    <location>
        <begin position="3"/>
        <end position="6"/>
    </location>
</feature>
<feature type="helix" evidence="3">
    <location>
        <begin position="7"/>
        <end position="10"/>
    </location>
</feature>
<feature type="helix" evidence="3">
    <location>
        <begin position="17"/>
        <end position="20"/>
    </location>
</feature>
<feature type="strand" evidence="3">
    <location>
        <begin position="24"/>
        <end position="28"/>
    </location>
</feature>
<feature type="helix" evidence="3">
    <location>
        <begin position="29"/>
        <end position="39"/>
    </location>
</feature>
<feature type="helix" evidence="3">
    <location>
        <begin position="56"/>
        <end position="70"/>
    </location>
</feature>
<feature type="strand" evidence="3">
    <location>
        <begin position="74"/>
        <end position="79"/>
    </location>
</feature>
<feature type="helix" evidence="3">
    <location>
        <begin position="126"/>
        <end position="139"/>
    </location>
</feature>
<feature type="strand" evidence="3">
    <location>
        <begin position="143"/>
        <end position="145"/>
    </location>
</feature>
<feature type="helix" evidence="3">
    <location>
        <begin position="150"/>
        <end position="159"/>
    </location>
</feature>
<feature type="strand" evidence="3">
    <location>
        <begin position="162"/>
        <end position="167"/>
    </location>
</feature>
<feature type="strand" evidence="3">
    <location>
        <begin position="169"/>
        <end position="171"/>
    </location>
</feature>
<feature type="helix" evidence="3">
    <location>
        <begin position="172"/>
        <end position="175"/>
    </location>
</feature>
<feature type="strand" evidence="3">
    <location>
        <begin position="179"/>
        <end position="184"/>
    </location>
</feature>
<feature type="strand" evidence="3">
    <location>
        <begin position="189"/>
        <end position="192"/>
    </location>
</feature>
<feature type="turn" evidence="3">
    <location>
        <begin position="194"/>
        <end position="196"/>
    </location>
</feature>
<feature type="strand" evidence="3">
    <location>
        <begin position="199"/>
        <end position="202"/>
    </location>
</feature>
<feature type="strand" evidence="3">
    <location>
        <begin position="205"/>
        <end position="208"/>
    </location>
</feature>
<feature type="helix" evidence="3">
    <location>
        <begin position="209"/>
        <end position="216"/>
    </location>
</feature>
<feature type="helix" evidence="3">
    <location>
        <begin position="221"/>
        <end position="231"/>
    </location>
</feature>
<feature type="helix" evidence="3">
    <location>
        <begin position="245"/>
        <end position="255"/>
    </location>
</feature>
<feature type="helix" evidence="3">
    <location>
        <begin position="259"/>
        <end position="263"/>
    </location>
</feature>
<feature type="helix" evidence="3">
    <location>
        <begin position="267"/>
        <end position="273"/>
    </location>
</feature>
<feature type="helix" evidence="3">
    <location>
        <begin position="278"/>
        <end position="286"/>
    </location>
</feature>
<feature type="helix" evidence="3">
    <location>
        <begin position="303"/>
        <end position="310"/>
    </location>
</feature>
<feature type="turn" evidence="3">
    <location>
        <begin position="311"/>
        <end position="314"/>
    </location>
</feature>
<feature type="helix" evidence="3">
    <location>
        <begin position="318"/>
        <end position="336"/>
    </location>
</feature>
<protein>
    <recommendedName>
        <fullName evidence="2">Flap endonuclease 1</fullName>
        <shortName evidence="2">FEN-1</shortName>
        <ecNumber evidence="2">3.1.-.-</ecNumber>
    </recommendedName>
    <alternativeName>
        <fullName evidence="2">Flap structure-specific endonuclease 1</fullName>
    </alternativeName>
</protein>
<gene>
    <name evidence="2" type="primary">fen</name>
    <name type="ordered locus">MK0566</name>
</gene>
<proteinExistence type="evidence at protein level"/>
<sequence length="348" mass="40252">MGLAELRELIEPEETDLRALAGREIAIDAFNALYQFLTTIMKDGRPLMDSRGRITSHLNGLLYRTVNLVEEGIKPVYVFDGEPPDLKRETLERRRERKEEAMEKLRRAKTKEEREKYARQVARLDESLVEDAKRLLDLMGIPWVQAPSEGEAQCAYMARCGDVWATGSQDYDSLLFGSPRLVRNITIVGKRKHPHTGEIIEVKPEIMRLEDVLDQLGLESREQLVDLAILLGTDYNPDGVPGIGPKRALQLIRKYGSLDELKDTDIWPKIERHLPVEPEKLRRLFLEPEVTDDYELDWDEPDEEGLVEFLVEERDFSEDRVRRAVERLKEALQELRKGGRQETLDAFF</sequence>
<keyword id="KW-0002">3D-structure</keyword>
<keyword id="KW-0227">DNA damage</keyword>
<keyword id="KW-0234">DNA repair</keyword>
<keyword id="KW-0235">DNA replication</keyword>
<keyword id="KW-0255">Endonuclease</keyword>
<keyword id="KW-0269">Exonuclease</keyword>
<keyword id="KW-0378">Hydrolase</keyword>
<keyword id="KW-0460">Magnesium</keyword>
<keyword id="KW-0479">Metal-binding</keyword>
<keyword id="KW-0540">Nuclease</keyword>
<keyword id="KW-1185">Reference proteome</keyword>